<dbReference type="EC" id="7.4.2.8" evidence="1"/>
<dbReference type="EMBL" id="CP000848">
    <property type="protein sequence ID" value="ABV76471.1"/>
    <property type="molecule type" value="Genomic_DNA"/>
</dbReference>
<dbReference type="RefSeq" id="WP_012151042.1">
    <property type="nucleotide sequence ID" value="NZ_CP121767.1"/>
</dbReference>
<dbReference type="SMR" id="A8GSU6"/>
<dbReference type="GeneID" id="79937562"/>
<dbReference type="KEGG" id="rri:A1G_04855"/>
<dbReference type="HOGENOM" id="CLU_005314_3_0_5"/>
<dbReference type="Proteomes" id="UP000006832">
    <property type="component" value="Chromosome"/>
</dbReference>
<dbReference type="GO" id="GO:0031522">
    <property type="term" value="C:cell envelope Sec protein transport complex"/>
    <property type="evidence" value="ECO:0007669"/>
    <property type="project" value="TreeGrafter"/>
</dbReference>
<dbReference type="GO" id="GO:0005829">
    <property type="term" value="C:cytosol"/>
    <property type="evidence" value="ECO:0007669"/>
    <property type="project" value="TreeGrafter"/>
</dbReference>
<dbReference type="GO" id="GO:0005886">
    <property type="term" value="C:plasma membrane"/>
    <property type="evidence" value="ECO:0007669"/>
    <property type="project" value="UniProtKB-SubCell"/>
</dbReference>
<dbReference type="GO" id="GO:0005524">
    <property type="term" value="F:ATP binding"/>
    <property type="evidence" value="ECO:0007669"/>
    <property type="project" value="UniProtKB-UniRule"/>
</dbReference>
<dbReference type="GO" id="GO:0046872">
    <property type="term" value="F:metal ion binding"/>
    <property type="evidence" value="ECO:0007669"/>
    <property type="project" value="UniProtKB-KW"/>
</dbReference>
<dbReference type="GO" id="GO:0008564">
    <property type="term" value="F:protein-exporting ATPase activity"/>
    <property type="evidence" value="ECO:0007669"/>
    <property type="project" value="UniProtKB-EC"/>
</dbReference>
<dbReference type="GO" id="GO:0065002">
    <property type="term" value="P:intracellular protein transmembrane transport"/>
    <property type="evidence" value="ECO:0007669"/>
    <property type="project" value="UniProtKB-UniRule"/>
</dbReference>
<dbReference type="GO" id="GO:0017038">
    <property type="term" value="P:protein import"/>
    <property type="evidence" value="ECO:0007669"/>
    <property type="project" value="InterPro"/>
</dbReference>
<dbReference type="GO" id="GO:0006605">
    <property type="term" value="P:protein targeting"/>
    <property type="evidence" value="ECO:0007669"/>
    <property type="project" value="UniProtKB-UniRule"/>
</dbReference>
<dbReference type="GO" id="GO:0043952">
    <property type="term" value="P:protein transport by the Sec complex"/>
    <property type="evidence" value="ECO:0007669"/>
    <property type="project" value="TreeGrafter"/>
</dbReference>
<dbReference type="CDD" id="cd17928">
    <property type="entry name" value="DEXDc_SecA"/>
    <property type="match status" value="1"/>
</dbReference>
<dbReference type="CDD" id="cd18803">
    <property type="entry name" value="SF2_C_secA"/>
    <property type="match status" value="1"/>
</dbReference>
<dbReference type="FunFam" id="3.40.50.300:FF:000113">
    <property type="entry name" value="Preprotein translocase subunit SecA"/>
    <property type="match status" value="1"/>
</dbReference>
<dbReference type="FunFam" id="3.90.1440.10:FF:000001">
    <property type="entry name" value="Preprotein translocase subunit SecA"/>
    <property type="match status" value="1"/>
</dbReference>
<dbReference type="FunFam" id="1.10.3060.10:FF:000003">
    <property type="entry name" value="Protein translocase subunit SecA"/>
    <property type="match status" value="1"/>
</dbReference>
<dbReference type="FunFam" id="3.40.50.300:FF:000334">
    <property type="entry name" value="Protein translocase subunit SecA"/>
    <property type="match status" value="1"/>
</dbReference>
<dbReference type="Gene3D" id="1.10.3060.10">
    <property type="entry name" value="Helical scaffold and wing domains of SecA"/>
    <property type="match status" value="1"/>
</dbReference>
<dbReference type="Gene3D" id="3.40.50.300">
    <property type="entry name" value="P-loop containing nucleotide triphosphate hydrolases"/>
    <property type="match status" value="2"/>
</dbReference>
<dbReference type="Gene3D" id="3.90.1440.10">
    <property type="entry name" value="SecA, preprotein cross-linking domain"/>
    <property type="match status" value="1"/>
</dbReference>
<dbReference type="HAMAP" id="MF_01382">
    <property type="entry name" value="SecA"/>
    <property type="match status" value="1"/>
</dbReference>
<dbReference type="InterPro" id="IPR014001">
    <property type="entry name" value="Helicase_ATP-bd"/>
</dbReference>
<dbReference type="InterPro" id="IPR027417">
    <property type="entry name" value="P-loop_NTPase"/>
</dbReference>
<dbReference type="InterPro" id="IPR004027">
    <property type="entry name" value="SEC_C_motif"/>
</dbReference>
<dbReference type="InterPro" id="IPR000185">
    <property type="entry name" value="SecA"/>
</dbReference>
<dbReference type="InterPro" id="IPR020937">
    <property type="entry name" value="SecA_CS"/>
</dbReference>
<dbReference type="InterPro" id="IPR011115">
    <property type="entry name" value="SecA_DEAD"/>
</dbReference>
<dbReference type="InterPro" id="IPR014018">
    <property type="entry name" value="SecA_motor_DEAD"/>
</dbReference>
<dbReference type="InterPro" id="IPR011130">
    <property type="entry name" value="SecA_preprotein_X-link_dom"/>
</dbReference>
<dbReference type="InterPro" id="IPR044722">
    <property type="entry name" value="SecA_SF2_C"/>
</dbReference>
<dbReference type="InterPro" id="IPR011116">
    <property type="entry name" value="SecA_Wing/Scaffold"/>
</dbReference>
<dbReference type="InterPro" id="IPR036266">
    <property type="entry name" value="SecA_Wing/Scaffold_sf"/>
</dbReference>
<dbReference type="InterPro" id="IPR036670">
    <property type="entry name" value="SecA_X-link_sf"/>
</dbReference>
<dbReference type="NCBIfam" id="NF009538">
    <property type="entry name" value="PRK12904.1"/>
    <property type="match status" value="1"/>
</dbReference>
<dbReference type="NCBIfam" id="TIGR00963">
    <property type="entry name" value="secA"/>
    <property type="match status" value="1"/>
</dbReference>
<dbReference type="PANTHER" id="PTHR30612:SF0">
    <property type="entry name" value="CHLOROPLAST PROTEIN-TRANSPORTING ATPASE"/>
    <property type="match status" value="1"/>
</dbReference>
<dbReference type="PANTHER" id="PTHR30612">
    <property type="entry name" value="SECA INNER MEMBRANE COMPONENT OF SEC PROTEIN SECRETION SYSTEM"/>
    <property type="match status" value="1"/>
</dbReference>
<dbReference type="Pfam" id="PF21090">
    <property type="entry name" value="P-loop_SecA"/>
    <property type="match status" value="1"/>
</dbReference>
<dbReference type="Pfam" id="PF02810">
    <property type="entry name" value="SEC-C"/>
    <property type="match status" value="1"/>
</dbReference>
<dbReference type="Pfam" id="PF07517">
    <property type="entry name" value="SecA_DEAD"/>
    <property type="match status" value="1"/>
</dbReference>
<dbReference type="Pfam" id="PF01043">
    <property type="entry name" value="SecA_PP_bind"/>
    <property type="match status" value="1"/>
</dbReference>
<dbReference type="Pfam" id="PF07516">
    <property type="entry name" value="SecA_SW"/>
    <property type="match status" value="1"/>
</dbReference>
<dbReference type="PRINTS" id="PR00906">
    <property type="entry name" value="SECA"/>
</dbReference>
<dbReference type="SMART" id="SM00957">
    <property type="entry name" value="SecA_DEAD"/>
    <property type="match status" value="1"/>
</dbReference>
<dbReference type="SMART" id="SM00958">
    <property type="entry name" value="SecA_PP_bind"/>
    <property type="match status" value="1"/>
</dbReference>
<dbReference type="SUPFAM" id="SSF81886">
    <property type="entry name" value="Helical scaffold and wing domains of SecA"/>
    <property type="match status" value="1"/>
</dbReference>
<dbReference type="SUPFAM" id="SSF52540">
    <property type="entry name" value="P-loop containing nucleoside triphosphate hydrolases"/>
    <property type="match status" value="2"/>
</dbReference>
<dbReference type="SUPFAM" id="SSF81767">
    <property type="entry name" value="Pre-protein crosslinking domain of SecA"/>
    <property type="match status" value="1"/>
</dbReference>
<dbReference type="PROSITE" id="PS01312">
    <property type="entry name" value="SECA"/>
    <property type="match status" value="1"/>
</dbReference>
<dbReference type="PROSITE" id="PS51196">
    <property type="entry name" value="SECA_MOTOR_DEAD"/>
    <property type="match status" value="1"/>
</dbReference>
<reference key="1">
    <citation type="submission" date="2007-09" db="EMBL/GenBank/DDBJ databases">
        <title>Complete genome sequence of Rickettsia rickettsii.</title>
        <authorList>
            <person name="Madan A."/>
            <person name="Fahey J."/>
            <person name="Helton E."/>
            <person name="Ketteman M."/>
            <person name="Madan A."/>
            <person name="Rodrigues S."/>
            <person name="Sanchez A."/>
            <person name="Dasch G."/>
            <person name="Eremeeva M."/>
        </authorList>
    </citation>
    <scope>NUCLEOTIDE SEQUENCE [LARGE SCALE GENOMIC DNA]</scope>
    <source>
        <strain>Sheila Smith</strain>
    </source>
</reference>
<comment type="function">
    <text evidence="1">Part of the Sec protein translocase complex. Interacts with the SecYEG preprotein conducting channel. Has a central role in coupling the hydrolysis of ATP to the transfer of proteins into and across the cell membrane, serving both as a receptor for the preprotein-SecB complex and as an ATP-driven molecular motor driving the stepwise translocation of polypeptide chains across the membrane.</text>
</comment>
<comment type="catalytic activity">
    <reaction evidence="1">
        <text>ATP + H2O + cellular proteinSide 1 = ADP + phosphate + cellular proteinSide 2.</text>
        <dbReference type="EC" id="7.4.2.8"/>
    </reaction>
</comment>
<comment type="cofactor">
    <cofactor evidence="1">
        <name>Zn(2+)</name>
        <dbReference type="ChEBI" id="CHEBI:29105"/>
    </cofactor>
    <text evidence="1">May bind 1 zinc ion per subunit.</text>
</comment>
<comment type="subunit">
    <text evidence="1">Monomer and homodimer. Part of the essential Sec protein translocation apparatus which comprises SecA, SecYEG and auxiliary proteins SecDF-YajC and YidC.</text>
</comment>
<comment type="subcellular location">
    <subcellularLocation>
        <location evidence="1">Cell inner membrane</location>
        <topology evidence="1">Peripheral membrane protein</topology>
        <orientation evidence="1">Cytoplasmic side</orientation>
    </subcellularLocation>
    <subcellularLocation>
        <location evidence="1">Cytoplasm</location>
    </subcellularLocation>
    <text evidence="1">Distribution is 50-50.</text>
</comment>
<comment type="similarity">
    <text evidence="1">Belongs to the SecA family.</text>
</comment>
<keyword id="KW-0067">ATP-binding</keyword>
<keyword id="KW-0997">Cell inner membrane</keyword>
<keyword id="KW-1003">Cell membrane</keyword>
<keyword id="KW-0963">Cytoplasm</keyword>
<keyword id="KW-0472">Membrane</keyword>
<keyword id="KW-0479">Metal-binding</keyword>
<keyword id="KW-0547">Nucleotide-binding</keyword>
<keyword id="KW-0653">Protein transport</keyword>
<keyword id="KW-1278">Translocase</keyword>
<keyword id="KW-0811">Translocation</keyword>
<keyword id="KW-0813">Transport</keyword>
<keyword id="KW-0862">Zinc</keyword>
<accession>A8GSU6</accession>
<name>SECA_RICRS</name>
<evidence type="ECO:0000255" key="1">
    <source>
        <dbReference type="HAMAP-Rule" id="MF_01382"/>
    </source>
</evidence>
<evidence type="ECO:0000256" key="2">
    <source>
        <dbReference type="SAM" id="MobiDB-lite"/>
    </source>
</evidence>
<proteinExistence type="inferred from homology"/>
<protein>
    <recommendedName>
        <fullName evidence="1">Protein translocase subunit SecA</fullName>
        <ecNumber evidence="1">7.4.2.8</ecNumber>
    </recommendedName>
</protein>
<organism>
    <name type="scientific">Rickettsia rickettsii (strain Sheila Smith)</name>
    <dbReference type="NCBI Taxonomy" id="392021"/>
    <lineage>
        <taxon>Bacteria</taxon>
        <taxon>Pseudomonadati</taxon>
        <taxon>Pseudomonadota</taxon>
        <taxon>Alphaproteobacteria</taxon>
        <taxon>Rickettsiales</taxon>
        <taxon>Rickettsiaceae</taxon>
        <taxon>Rickettsieae</taxon>
        <taxon>Rickettsia</taxon>
        <taxon>spotted fever group</taxon>
    </lineage>
</organism>
<feature type="chain" id="PRO_0000320978" description="Protein translocase subunit SecA">
    <location>
        <begin position="1"/>
        <end position="906"/>
    </location>
</feature>
<feature type="region of interest" description="Disordered" evidence="2">
    <location>
        <begin position="863"/>
        <end position="887"/>
    </location>
</feature>
<feature type="binding site" evidence="1">
    <location>
        <position position="86"/>
    </location>
    <ligand>
        <name>ATP</name>
        <dbReference type="ChEBI" id="CHEBI:30616"/>
    </ligand>
</feature>
<feature type="binding site" evidence="1">
    <location>
        <begin position="104"/>
        <end position="108"/>
    </location>
    <ligand>
        <name>ATP</name>
        <dbReference type="ChEBI" id="CHEBI:30616"/>
    </ligand>
</feature>
<feature type="binding site" evidence="1">
    <location>
        <position position="499"/>
    </location>
    <ligand>
        <name>ATP</name>
        <dbReference type="ChEBI" id="CHEBI:30616"/>
    </ligand>
</feature>
<feature type="binding site" evidence="1">
    <location>
        <position position="890"/>
    </location>
    <ligand>
        <name>Zn(2+)</name>
        <dbReference type="ChEBI" id="CHEBI:29105"/>
    </ligand>
</feature>
<feature type="binding site" evidence="1">
    <location>
        <position position="892"/>
    </location>
    <ligand>
        <name>Zn(2+)</name>
        <dbReference type="ChEBI" id="CHEBI:29105"/>
    </ligand>
</feature>
<feature type="binding site" evidence="1">
    <location>
        <position position="901"/>
    </location>
    <ligand>
        <name>Zn(2+)</name>
        <dbReference type="ChEBI" id="CHEBI:29105"/>
    </ligand>
</feature>
<feature type="binding site" evidence="1">
    <location>
        <position position="902"/>
    </location>
    <ligand>
        <name>Zn(2+)</name>
        <dbReference type="ChEBI" id="CHEBI:29105"/>
    </ligand>
</feature>
<sequence length="906" mass="103264">MLSILKKLFGTANDRTVKKLFSEITKINSLEPAIQKLSDEELKNKTVEFKEKLKNGATLDDIVYEAFAVVREAAKRVCGMRHFDVQLIGGLILHRGMITEMRTGEGKTLVATLPAYLNALTGKGVHVVTVNDYLARRDSAAMGKIYNFLGLSVGCIVGGMPDEVKRAAYNADITHATNNELGFDYLRDNMKYSLQERVLRPFNFAIIDEVDSILIDEARTPLVISGPVNDNAELYGKIDKIVRLLNASDFEKDEKLKTINLTETGITHIESLLSKENIIKPDTSLYDFENLTLVHYINQALRAHNMFTVNVDYLVREGKVMIIDEFTGRVMEGRRYSEGLHQALEAKENVKIQNENQTLASITFQNYFRNYPKLSGMTGTAMTEAPELKDIYNLDVVAVPTHNKVTRLDLDDEIYGSKKEKYDAILKLIRDCYDRGQPILVGTISIEKSEELSSVLNKENIPHKVLNAKFHEQEAFIIAQAGRFKAVTIATNMAGRGTDIMLGGNPEMLIEQLDKEHNYEAKIAEIKAQIAEEKKQVIEAGGLFVIGTERHESRRIDNQLRGRSGRQGDPGKTKFFLSLDDDLMRIFASDRISGVLRTLGLKDGEAIHHPMISRSLEKAQQKVEGHNYEMRKNLLRFDDVMNDQRKIIYEQRTEIIKSKDSHGFLNSTTEELAKKIVLTFMPVGSYREDWDIENLSVELHRVFSIKFDHNVVSKNDVTEEEITKTVIQMAHDIYKSKEEAYSSELMHNAVKYILLTTLDQVWKDHLYSLDHLRQGISLRAYGQKDPLSEYKREAFNLFEQMLNNLKELFIQTVYHFHIDLKNVQKEDVSLEYKKLQKNMCESREDPAFSKYNAGSSLETDLKPVVSRIDPKDRNPDDPTSWGRVSRNELCPCGSGKKYKYCHGANE</sequence>
<gene>
    <name evidence="1" type="primary">secA</name>
    <name type="ordered locus">A1G_04855</name>
</gene>